<keyword id="KW-0496">Mitochondrion</keyword>
<keyword id="KW-0648">Protein biosynthesis</keyword>
<keyword id="KW-1185">Reference proteome</keyword>
<keyword id="KW-0809">Transit peptide</keyword>
<name>RRF1_EREGS</name>
<protein>
    <recommendedName>
        <fullName>Ribosome-recycling factor, mitochondrial</fullName>
        <shortName>RRF</shortName>
    </recommendedName>
    <alternativeName>
        <fullName>Ribosome-releasing factor, mitochondrial</fullName>
    </alternativeName>
</protein>
<proteinExistence type="inferred from homology"/>
<organism>
    <name type="scientific">Eremothecium gossypii (strain ATCC 10895 / CBS 109.51 / FGSC 9923 / NRRL Y-1056)</name>
    <name type="common">Yeast</name>
    <name type="synonym">Ashbya gossypii</name>
    <dbReference type="NCBI Taxonomy" id="284811"/>
    <lineage>
        <taxon>Eukaryota</taxon>
        <taxon>Fungi</taxon>
        <taxon>Dikarya</taxon>
        <taxon>Ascomycota</taxon>
        <taxon>Saccharomycotina</taxon>
        <taxon>Saccharomycetes</taxon>
        <taxon>Saccharomycetales</taxon>
        <taxon>Saccharomycetaceae</taxon>
        <taxon>Eremothecium</taxon>
    </lineage>
</organism>
<feature type="transit peptide" description="Mitochondrion" evidence="2">
    <location>
        <begin position="1"/>
        <end status="unknown"/>
    </location>
</feature>
<feature type="chain" id="PRO_0000031086" description="Ribosome-recycling factor, mitochondrial">
    <location>
        <begin status="unknown"/>
        <end position="226"/>
    </location>
</feature>
<evidence type="ECO:0000250" key="1"/>
<evidence type="ECO:0000255" key="2"/>
<evidence type="ECO:0000305" key="3"/>
<comment type="function">
    <text evidence="1">Necessary for protein synthesis in mitochondria. Functions as a ribosome recycling factor in mitochondria (By similarity).</text>
</comment>
<comment type="subcellular location">
    <subcellularLocation>
        <location evidence="1">Mitochondrion</location>
    </subcellularLocation>
</comment>
<comment type="similarity">
    <text evidence="3">Belongs to the RRF family.</text>
</comment>
<sequence length="226" mass="25420">MFLLNASRLGAGSRLFSSAGVQFAKKRGQAAKEAVEVDLVDVGDYVKKATERFQHTVELHKKRLGQMKAGKPDATMFDGLAVGNEKQKFTELAATSVKGKNMLIVTVFDPKDTKRVASAIVGAGLNVTTERVLENQQQLKISLPPVTTETRERLCRDMKKVFEEYKNSANRHSLGHVRSEVLKELKKLDKKNDSVRKVIQEIENLHKEYTAMLQEQLKHAEKNAMR</sequence>
<reference key="1">
    <citation type="journal article" date="2004" name="Science">
        <title>The Ashbya gossypii genome as a tool for mapping the ancient Saccharomyces cerevisiae genome.</title>
        <authorList>
            <person name="Dietrich F.S."/>
            <person name="Voegeli S."/>
            <person name="Brachat S."/>
            <person name="Lerch A."/>
            <person name="Gates K."/>
            <person name="Steiner S."/>
            <person name="Mohr C."/>
            <person name="Poehlmann R."/>
            <person name="Luedi P."/>
            <person name="Choi S."/>
            <person name="Wing R.A."/>
            <person name="Flavier A."/>
            <person name="Gaffney T.D."/>
            <person name="Philippsen P."/>
        </authorList>
    </citation>
    <scope>NUCLEOTIDE SEQUENCE [LARGE SCALE GENOMIC DNA]</scope>
    <source>
        <strain>ATCC 10895 / CBS 109.51 / FGSC 9923 / NRRL Y-1056</strain>
    </source>
</reference>
<reference key="2">
    <citation type="journal article" date="2013" name="G3 (Bethesda)">
        <title>Genomes of Ashbya fungi isolated from insects reveal four mating-type loci, numerous translocations, lack of transposons, and distinct gene duplications.</title>
        <authorList>
            <person name="Dietrich F.S."/>
            <person name="Voegeli S."/>
            <person name="Kuo S."/>
            <person name="Philippsen P."/>
        </authorList>
    </citation>
    <scope>GENOME REANNOTATION</scope>
    <source>
        <strain>ATCC 10895 / CBS 109.51 / FGSC 9923 / NRRL Y-1056</strain>
    </source>
</reference>
<gene>
    <name type="primary">RRF1</name>
    <name type="ordered locus">AAL074C</name>
</gene>
<accession>Q75F02</accession>
<dbReference type="EMBL" id="AE016814">
    <property type="protein sequence ID" value="AAS50292.1"/>
    <property type="molecule type" value="Genomic_DNA"/>
</dbReference>
<dbReference type="RefSeq" id="NP_982468.1">
    <property type="nucleotide sequence ID" value="NM_207821.1"/>
</dbReference>
<dbReference type="SMR" id="Q75F02"/>
<dbReference type="FunCoup" id="Q75F02">
    <property type="interactions" value="78"/>
</dbReference>
<dbReference type="STRING" id="284811.Q75F02"/>
<dbReference type="EnsemblFungi" id="AAS50292">
    <property type="protein sequence ID" value="AAS50292"/>
    <property type="gene ID" value="AGOS_AAL074C"/>
</dbReference>
<dbReference type="GeneID" id="4618550"/>
<dbReference type="KEGG" id="ago:AGOS_AAL074C"/>
<dbReference type="eggNOG" id="KOG4759">
    <property type="taxonomic scope" value="Eukaryota"/>
</dbReference>
<dbReference type="HOGENOM" id="CLU_085410_0_0_1"/>
<dbReference type="InParanoid" id="Q75F02"/>
<dbReference type="OMA" id="PNNDQQL"/>
<dbReference type="OrthoDB" id="407355at2759"/>
<dbReference type="Proteomes" id="UP000000591">
    <property type="component" value="Chromosome I"/>
</dbReference>
<dbReference type="GO" id="GO:0005739">
    <property type="term" value="C:mitochondrion"/>
    <property type="evidence" value="ECO:0000318"/>
    <property type="project" value="GO_Central"/>
</dbReference>
<dbReference type="GO" id="GO:0043023">
    <property type="term" value="F:ribosomal large subunit binding"/>
    <property type="evidence" value="ECO:0000318"/>
    <property type="project" value="GO_Central"/>
</dbReference>
<dbReference type="GO" id="GO:0032543">
    <property type="term" value="P:mitochondrial translation"/>
    <property type="evidence" value="ECO:0007669"/>
    <property type="project" value="EnsemblFungi"/>
</dbReference>
<dbReference type="GO" id="GO:0006412">
    <property type="term" value="P:translation"/>
    <property type="evidence" value="ECO:0000318"/>
    <property type="project" value="GO_Central"/>
</dbReference>
<dbReference type="Gene3D" id="3.30.1360.40">
    <property type="match status" value="1"/>
</dbReference>
<dbReference type="Gene3D" id="1.10.132.20">
    <property type="entry name" value="Ribosome-recycling factor"/>
    <property type="match status" value="1"/>
</dbReference>
<dbReference type="InterPro" id="IPR002661">
    <property type="entry name" value="Ribosome_recyc_fac"/>
</dbReference>
<dbReference type="InterPro" id="IPR023584">
    <property type="entry name" value="Ribosome_recyc_fac_dom"/>
</dbReference>
<dbReference type="InterPro" id="IPR036191">
    <property type="entry name" value="RRF_sf"/>
</dbReference>
<dbReference type="PANTHER" id="PTHR20982:SF3">
    <property type="entry name" value="MITOCHONDRIAL RIBOSOME RECYCLING FACTOR PSEUDO 1"/>
    <property type="match status" value="1"/>
</dbReference>
<dbReference type="PANTHER" id="PTHR20982">
    <property type="entry name" value="RIBOSOME RECYCLING FACTOR"/>
    <property type="match status" value="1"/>
</dbReference>
<dbReference type="Pfam" id="PF01765">
    <property type="entry name" value="RRF"/>
    <property type="match status" value="1"/>
</dbReference>
<dbReference type="SUPFAM" id="SSF55194">
    <property type="entry name" value="Ribosome recycling factor, RRF"/>
    <property type="match status" value="1"/>
</dbReference>